<proteinExistence type="predicted"/>
<evidence type="ECO:0000255" key="1">
    <source>
        <dbReference type="PROSITE-ProRule" id="PRU00275"/>
    </source>
</evidence>
<evidence type="ECO:0000255" key="2">
    <source>
        <dbReference type="PROSITE-ProRule" id="PRU10094"/>
    </source>
</evidence>
<accession>P10270</accession>
<sequence length="195" mass="21351">RSFPLETRLSNPQIKKLIEGGLSAPQTVTPITDPLSEAELECLLSIPLARSRPSVAVYLSGPWLQPSQNQALMLVDTGAENTVLPQNWLVRDYPRIPAAVLGAGGVSRNRYNWLQGPLTLALKPEGPFITIPKILVDTFDKWQILGRDVLSRLQASISIPEEVRPPMVGVLDAPPSHIGLEHLPVPPEVPQFPLN</sequence>
<name>VPRT_BLVJ</name>
<dbReference type="EC" id="3.4.23.-"/>
<dbReference type="EMBL" id="M10987">
    <property type="status" value="NOT_ANNOTATED_CDS"/>
    <property type="molecule type" value="Genomic_RNA"/>
</dbReference>
<dbReference type="PIR" id="S29357">
    <property type="entry name" value="S29357"/>
</dbReference>
<dbReference type="SMR" id="P10270"/>
<dbReference type="MEROPS" id="A02.013"/>
<dbReference type="BRENDA" id="3.4.23.B9">
    <property type="organism ID" value="924"/>
</dbReference>
<dbReference type="GO" id="GO:0004190">
    <property type="term" value="F:aspartic-type endopeptidase activity"/>
    <property type="evidence" value="ECO:0007669"/>
    <property type="project" value="UniProtKB-KW"/>
</dbReference>
<dbReference type="GO" id="GO:0006508">
    <property type="term" value="P:proteolysis"/>
    <property type="evidence" value="ECO:0007669"/>
    <property type="project" value="UniProtKB-KW"/>
</dbReference>
<dbReference type="Gene3D" id="2.40.70.10">
    <property type="entry name" value="Acid Proteases"/>
    <property type="match status" value="1"/>
</dbReference>
<dbReference type="InterPro" id="IPR001995">
    <property type="entry name" value="Peptidase_A2_cat"/>
</dbReference>
<dbReference type="InterPro" id="IPR021109">
    <property type="entry name" value="Peptidase_aspartic_dom_sf"/>
</dbReference>
<dbReference type="InterPro" id="IPR018061">
    <property type="entry name" value="Retropepsins"/>
</dbReference>
<dbReference type="Pfam" id="PF00077">
    <property type="entry name" value="RVP"/>
    <property type="match status" value="1"/>
</dbReference>
<dbReference type="SUPFAM" id="SSF50630">
    <property type="entry name" value="Acid proteases"/>
    <property type="match status" value="1"/>
</dbReference>
<dbReference type="PROSITE" id="PS50175">
    <property type="entry name" value="ASP_PROT_RETROV"/>
    <property type="match status" value="1"/>
</dbReference>
<dbReference type="PROSITE" id="PS00141">
    <property type="entry name" value="ASP_PROTEASE"/>
    <property type="match status" value="1"/>
</dbReference>
<feature type="chain" id="PRO_0000199532" description="Protease">
    <location>
        <begin position="1"/>
        <end position="195"/>
    </location>
</feature>
<feature type="domain" description="Peptidase A2" evidence="1">
    <location>
        <begin position="71"/>
        <end position="149"/>
    </location>
</feature>
<feature type="active site" evidence="2">
    <location>
        <position position="76"/>
    </location>
</feature>
<keyword id="KW-0064">Aspartyl protease</keyword>
<keyword id="KW-0378">Hydrolase</keyword>
<keyword id="KW-0645">Protease</keyword>
<organismHost>
    <name type="scientific">Bos taurus</name>
    <name type="common">Bovine</name>
    <dbReference type="NCBI Taxonomy" id="9913"/>
</organismHost>
<protein>
    <recommendedName>
        <fullName>Protease</fullName>
        <ecNumber>3.4.23.-</ecNumber>
    </recommendedName>
</protein>
<reference key="1">
    <citation type="journal article" date="1985" name="Virology">
        <title>The gag and pol genes of bovine leukemia virus: nucleotide sequence and analysis.</title>
        <authorList>
            <person name="Rice N.R."/>
            <person name="Stephens R.M."/>
            <person name="Burny A."/>
            <person name="Gilden R.V."/>
        </authorList>
    </citation>
    <scope>NUCLEOTIDE SEQUENCE [GENOMIC RNA]</scope>
</reference>
<organism>
    <name type="scientific">Bovine leukemia virus (isolate Japanese BLV-1)</name>
    <name type="common">BLV</name>
    <dbReference type="NCBI Taxonomy" id="11907"/>
    <lineage>
        <taxon>Viruses</taxon>
        <taxon>Riboviria</taxon>
        <taxon>Pararnavirae</taxon>
        <taxon>Artverviricota</taxon>
        <taxon>Revtraviricetes</taxon>
        <taxon>Ortervirales</taxon>
        <taxon>Retroviridae</taxon>
        <taxon>Orthoretrovirinae</taxon>
        <taxon>Deltaretrovirus</taxon>
        <taxon>Bovine leukemia virus</taxon>
    </lineage>
</organism>